<evidence type="ECO:0000255" key="1">
    <source>
        <dbReference type="HAMAP-Rule" id="MF_00377"/>
    </source>
</evidence>
<reference key="1">
    <citation type="journal article" date="2005" name="J. Bacteriol.">
        <title>Insights on evolution of virulence and resistance from the complete genome analysis of an early methicillin-resistant Staphylococcus aureus strain and a biofilm-producing methicillin-resistant Staphylococcus epidermidis strain.</title>
        <authorList>
            <person name="Gill S.R."/>
            <person name="Fouts D.E."/>
            <person name="Archer G.L."/>
            <person name="Mongodin E.F."/>
            <person name="DeBoy R.T."/>
            <person name="Ravel J."/>
            <person name="Paulsen I.T."/>
            <person name="Kolonay J.F."/>
            <person name="Brinkac L.M."/>
            <person name="Beanan M.J."/>
            <person name="Dodson R.J."/>
            <person name="Daugherty S.C."/>
            <person name="Madupu R."/>
            <person name="Angiuoli S.V."/>
            <person name="Durkin A.S."/>
            <person name="Haft D.H."/>
            <person name="Vamathevan J.J."/>
            <person name="Khouri H."/>
            <person name="Utterback T.R."/>
            <person name="Lee C."/>
            <person name="Dimitrov G."/>
            <person name="Jiang L."/>
            <person name="Qin H."/>
            <person name="Weidman J."/>
            <person name="Tran K."/>
            <person name="Kang K.H."/>
            <person name="Hance I.R."/>
            <person name="Nelson K.E."/>
            <person name="Fraser C.M."/>
        </authorList>
    </citation>
    <scope>NUCLEOTIDE SEQUENCE [LARGE SCALE GENOMIC DNA]</scope>
    <source>
        <strain>ATCC 35984 / DSM 28319 / BCRC 17069 / CCUG 31568 / BM 3577 / RP62A</strain>
    </source>
</reference>
<gene>
    <name evidence="1" type="primary">dnaA</name>
    <name type="ordered locus">SERP2553</name>
</gene>
<sequence length="451" mass="52111">MSEKEIWDKVLEIAQERISNTSYQTFIKDTQLYSLKNDEAIILVSLPFNASWLNQRYSEIMQAIIYDVIGYEVKPHFISEDELASYNNVNTQEVQEPQVQHSSIDDKTWGKEQFNMHNTFDTFVIGPGNRFPHAASLAVAEAPAEAYNPLFIYGGVGLGKTHLMHAIGHHVLSNKPNAKVIYTSSEKFTNEFIKSIRDNETEAFREKYRKIDVLLIDDIQFIQNKEQTQEEFFHTFNELHQNNKQIVISSDRPPKEIAKLEDRLRSRFEWGLIVDITPPDYETRMAILQKKIEEENLDIPPEALNYIANQIQSNIRELEGALTRLLAYSKLQGKPITTELTAEALKDIIQSPKSKKITIQDIQKIVGQYYSVRIEDFSAKKRTKSIAYPRQIAMYLSRELTDFSLPKIGEEFGGRDHTTVIHAHEKIANDIKSDPTFKQEVENLEKEIRNQ</sequence>
<accession>Q5HJZ9</accession>
<keyword id="KW-0067">ATP-binding</keyword>
<keyword id="KW-0963">Cytoplasm</keyword>
<keyword id="KW-0235">DNA replication</keyword>
<keyword id="KW-0238">DNA-binding</keyword>
<keyword id="KW-0446">Lipid-binding</keyword>
<keyword id="KW-0547">Nucleotide-binding</keyword>
<keyword id="KW-1185">Reference proteome</keyword>
<feature type="chain" id="PRO_0000114266" description="Chromosomal replication initiator protein DnaA">
    <location>
        <begin position="1"/>
        <end position="451"/>
    </location>
</feature>
<feature type="region of interest" description="Domain I, interacts with DnaA modulators" evidence="1">
    <location>
        <begin position="1"/>
        <end position="71"/>
    </location>
</feature>
<feature type="region of interest" description="Domain II" evidence="1">
    <location>
        <begin position="71"/>
        <end position="112"/>
    </location>
</feature>
<feature type="region of interest" description="Domain III, AAA+ region" evidence="1">
    <location>
        <begin position="113"/>
        <end position="329"/>
    </location>
</feature>
<feature type="region of interest" description="Domain IV, binds dsDNA" evidence="1">
    <location>
        <begin position="330"/>
        <end position="451"/>
    </location>
</feature>
<feature type="binding site" evidence="1">
    <location>
        <position position="157"/>
    </location>
    <ligand>
        <name>ATP</name>
        <dbReference type="ChEBI" id="CHEBI:30616"/>
    </ligand>
</feature>
<feature type="binding site" evidence="1">
    <location>
        <position position="159"/>
    </location>
    <ligand>
        <name>ATP</name>
        <dbReference type="ChEBI" id="CHEBI:30616"/>
    </ligand>
</feature>
<feature type="binding site" evidence="1">
    <location>
        <position position="160"/>
    </location>
    <ligand>
        <name>ATP</name>
        <dbReference type="ChEBI" id="CHEBI:30616"/>
    </ligand>
</feature>
<feature type="binding site" evidence="1">
    <location>
        <position position="161"/>
    </location>
    <ligand>
        <name>ATP</name>
        <dbReference type="ChEBI" id="CHEBI:30616"/>
    </ligand>
</feature>
<name>DNAA_STAEQ</name>
<proteinExistence type="inferred from homology"/>
<comment type="function">
    <text evidence="1">Plays an essential role in the initiation and regulation of chromosomal replication. ATP-DnaA binds to the origin of replication (oriC) to initiate formation of the DNA replication initiation complex once per cell cycle. Binds the DnaA box (a 9 base pair repeat at the origin) and separates the double-stranded (ds)DNA. Forms a right-handed helical filament on oriC DNA; dsDNA binds to the exterior of the filament while single-stranded (ss)DNA is stabiized in the filament's interior. The ATP-DnaA-oriC complex binds and stabilizes one strand of the AT-rich DNA unwinding element (DUE), permitting loading of DNA polymerase. After initiation quickly degrades to an ADP-DnaA complex that is not apt for DNA replication. Binds acidic phospholipids.</text>
</comment>
<comment type="subunit">
    <text evidence="1">Oligomerizes as a right-handed, spiral filament on DNA at oriC.</text>
</comment>
<comment type="subcellular location">
    <subcellularLocation>
        <location evidence="1">Cytoplasm</location>
    </subcellularLocation>
</comment>
<comment type="domain">
    <text evidence="1">Domain I is involved in oligomerization and binding regulators, domain II is flexibile and of varying length in different bacteria, domain III forms the AAA+ region, while domain IV binds dsDNA.</text>
</comment>
<comment type="similarity">
    <text evidence="1">Belongs to the DnaA family.</text>
</comment>
<protein>
    <recommendedName>
        <fullName evidence="1">Chromosomal replication initiator protein DnaA</fullName>
    </recommendedName>
</protein>
<organism>
    <name type="scientific">Staphylococcus epidermidis (strain ATCC 35984 / DSM 28319 / BCRC 17069 / CCUG 31568 / BM 3577 / RP62A)</name>
    <dbReference type="NCBI Taxonomy" id="176279"/>
    <lineage>
        <taxon>Bacteria</taxon>
        <taxon>Bacillati</taxon>
        <taxon>Bacillota</taxon>
        <taxon>Bacilli</taxon>
        <taxon>Bacillales</taxon>
        <taxon>Staphylococcaceae</taxon>
        <taxon>Staphylococcus</taxon>
    </lineage>
</organism>
<dbReference type="EMBL" id="CP000029">
    <property type="protein sequence ID" value="AAW53385.1"/>
    <property type="molecule type" value="Genomic_DNA"/>
</dbReference>
<dbReference type="RefSeq" id="WP_001831814.1">
    <property type="nucleotide sequence ID" value="NC_002976.3"/>
</dbReference>
<dbReference type="SMR" id="Q5HJZ9"/>
<dbReference type="STRING" id="176279.SERP2553"/>
<dbReference type="KEGG" id="ser:SERP2553"/>
<dbReference type="eggNOG" id="COG0593">
    <property type="taxonomic scope" value="Bacteria"/>
</dbReference>
<dbReference type="HOGENOM" id="CLU_026910_3_1_9"/>
<dbReference type="Proteomes" id="UP000000531">
    <property type="component" value="Chromosome"/>
</dbReference>
<dbReference type="GO" id="GO:0005737">
    <property type="term" value="C:cytoplasm"/>
    <property type="evidence" value="ECO:0007669"/>
    <property type="project" value="UniProtKB-SubCell"/>
</dbReference>
<dbReference type="GO" id="GO:0005886">
    <property type="term" value="C:plasma membrane"/>
    <property type="evidence" value="ECO:0007669"/>
    <property type="project" value="TreeGrafter"/>
</dbReference>
<dbReference type="GO" id="GO:0005524">
    <property type="term" value="F:ATP binding"/>
    <property type="evidence" value="ECO:0007669"/>
    <property type="project" value="UniProtKB-UniRule"/>
</dbReference>
<dbReference type="GO" id="GO:0016887">
    <property type="term" value="F:ATP hydrolysis activity"/>
    <property type="evidence" value="ECO:0007669"/>
    <property type="project" value="InterPro"/>
</dbReference>
<dbReference type="GO" id="GO:0003688">
    <property type="term" value="F:DNA replication origin binding"/>
    <property type="evidence" value="ECO:0007669"/>
    <property type="project" value="UniProtKB-UniRule"/>
</dbReference>
<dbReference type="GO" id="GO:0008289">
    <property type="term" value="F:lipid binding"/>
    <property type="evidence" value="ECO:0007669"/>
    <property type="project" value="UniProtKB-KW"/>
</dbReference>
<dbReference type="GO" id="GO:0006270">
    <property type="term" value="P:DNA replication initiation"/>
    <property type="evidence" value="ECO:0007669"/>
    <property type="project" value="UniProtKB-UniRule"/>
</dbReference>
<dbReference type="GO" id="GO:0006275">
    <property type="term" value="P:regulation of DNA replication"/>
    <property type="evidence" value="ECO:0007669"/>
    <property type="project" value="UniProtKB-UniRule"/>
</dbReference>
<dbReference type="CDD" id="cd00009">
    <property type="entry name" value="AAA"/>
    <property type="match status" value="1"/>
</dbReference>
<dbReference type="CDD" id="cd06571">
    <property type="entry name" value="Bac_DnaA_C"/>
    <property type="match status" value="1"/>
</dbReference>
<dbReference type="FunFam" id="1.10.1750.10:FF:000003">
    <property type="entry name" value="Chromosomal replication initiator protein DnaA"/>
    <property type="match status" value="1"/>
</dbReference>
<dbReference type="FunFam" id="1.10.8.60:FF:000003">
    <property type="entry name" value="Chromosomal replication initiator protein DnaA"/>
    <property type="match status" value="1"/>
</dbReference>
<dbReference type="FunFam" id="3.40.50.300:FF:000150">
    <property type="entry name" value="Chromosomal replication initiator protein DnaA"/>
    <property type="match status" value="1"/>
</dbReference>
<dbReference type="Gene3D" id="1.10.1750.10">
    <property type="match status" value="1"/>
</dbReference>
<dbReference type="Gene3D" id="1.10.8.60">
    <property type="match status" value="1"/>
</dbReference>
<dbReference type="Gene3D" id="3.30.300.180">
    <property type="match status" value="1"/>
</dbReference>
<dbReference type="Gene3D" id="3.40.50.300">
    <property type="entry name" value="P-loop containing nucleotide triphosphate hydrolases"/>
    <property type="match status" value="1"/>
</dbReference>
<dbReference type="HAMAP" id="MF_00377">
    <property type="entry name" value="DnaA_bact"/>
    <property type="match status" value="1"/>
</dbReference>
<dbReference type="InterPro" id="IPR003593">
    <property type="entry name" value="AAA+_ATPase"/>
</dbReference>
<dbReference type="InterPro" id="IPR001957">
    <property type="entry name" value="Chromosome_initiator_DnaA"/>
</dbReference>
<dbReference type="InterPro" id="IPR020591">
    <property type="entry name" value="Chromosome_initiator_DnaA-like"/>
</dbReference>
<dbReference type="InterPro" id="IPR018312">
    <property type="entry name" value="Chromosome_initiator_DnaA_CS"/>
</dbReference>
<dbReference type="InterPro" id="IPR013159">
    <property type="entry name" value="DnaA_C"/>
</dbReference>
<dbReference type="InterPro" id="IPR013317">
    <property type="entry name" value="DnaA_dom"/>
</dbReference>
<dbReference type="InterPro" id="IPR024633">
    <property type="entry name" value="DnaA_N_dom"/>
</dbReference>
<dbReference type="InterPro" id="IPR038454">
    <property type="entry name" value="DnaA_N_sf"/>
</dbReference>
<dbReference type="InterPro" id="IPR027417">
    <property type="entry name" value="P-loop_NTPase"/>
</dbReference>
<dbReference type="InterPro" id="IPR010921">
    <property type="entry name" value="Trp_repressor/repl_initiator"/>
</dbReference>
<dbReference type="NCBIfam" id="TIGR00362">
    <property type="entry name" value="DnaA"/>
    <property type="match status" value="1"/>
</dbReference>
<dbReference type="PANTHER" id="PTHR30050">
    <property type="entry name" value="CHROMOSOMAL REPLICATION INITIATOR PROTEIN DNAA"/>
    <property type="match status" value="1"/>
</dbReference>
<dbReference type="PANTHER" id="PTHR30050:SF2">
    <property type="entry name" value="CHROMOSOMAL REPLICATION INITIATOR PROTEIN DNAA"/>
    <property type="match status" value="1"/>
</dbReference>
<dbReference type="Pfam" id="PF00308">
    <property type="entry name" value="Bac_DnaA"/>
    <property type="match status" value="1"/>
</dbReference>
<dbReference type="Pfam" id="PF08299">
    <property type="entry name" value="Bac_DnaA_C"/>
    <property type="match status" value="1"/>
</dbReference>
<dbReference type="Pfam" id="PF11638">
    <property type="entry name" value="DnaA_N"/>
    <property type="match status" value="1"/>
</dbReference>
<dbReference type="PRINTS" id="PR00051">
    <property type="entry name" value="DNAA"/>
</dbReference>
<dbReference type="SMART" id="SM00382">
    <property type="entry name" value="AAA"/>
    <property type="match status" value="1"/>
</dbReference>
<dbReference type="SMART" id="SM00760">
    <property type="entry name" value="Bac_DnaA_C"/>
    <property type="match status" value="1"/>
</dbReference>
<dbReference type="SUPFAM" id="SSF52540">
    <property type="entry name" value="P-loop containing nucleoside triphosphate hydrolases"/>
    <property type="match status" value="1"/>
</dbReference>
<dbReference type="SUPFAM" id="SSF48295">
    <property type="entry name" value="TrpR-like"/>
    <property type="match status" value="1"/>
</dbReference>
<dbReference type="PROSITE" id="PS01008">
    <property type="entry name" value="DNAA"/>
    <property type="match status" value="1"/>
</dbReference>